<keyword id="KW-0963">Cytoplasm</keyword>
<keyword id="KW-0312">Gluconeogenesis</keyword>
<keyword id="KW-0324">Glycolysis</keyword>
<keyword id="KW-0413">Isomerase</keyword>
<dbReference type="EC" id="5.3.1.1" evidence="1"/>
<dbReference type="EMBL" id="CP001091">
    <property type="protein sequence ID" value="ACE62666.1"/>
    <property type="molecule type" value="Genomic_DNA"/>
</dbReference>
<dbReference type="RefSeq" id="WP_005599672.1">
    <property type="nucleotide sequence ID" value="NC_010939.1"/>
</dbReference>
<dbReference type="SMR" id="B3H2Z6"/>
<dbReference type="GeneID" id="48600230"/>
<dbReference type="KEGG" id="apa:APP7_2014"/>
<dbReference type="HOGENOM" id="CLU_024251_2_1_6"/>
<dbReference type="UniPathway" id="UPA00109">
    <property type="reaction ID" value="UER00189"/>
</dbReference>
<dbReference type="UniPathway" id="UPA00138"/>
<dbReference type="Proteomes" id="UP000001226">
    <property type="component" value="Chromosome"/>
</dbReference>
<dbReference type="GO" id="GO:0005829">
    <property type="term" value="C:cytosol"/>
    <property type="evidence" value="ECO:0007669"/>
    <property type="project" value="TreeGrafter"/>
</dbReference>
<dbReference type="GO" id="GO:0004807">
    <property type="term" value="F:triose-phosphate isomerase activity"/>
    <property type="evidence" value="ECO:0007669"/>
    <property type="project" value="UniProtKB-UniRule"/>
</dbReference>
<dbReference type="GO" id="GO:0006094">
    <property type="term" value="P:gluconeogenesis"/>
    <property type="evidence" value="ECO:0007669"/>
    <property type="project" value="UniProtKB-UniRule"/>
</dbReference>
<dbReference type="GO" id="GO:0046166">
    <property type="term" value="P:glyceraldehyde-3-phosphate biosynthetic process"/>
    <property type="evidence" value="ECO:0007669"/>
    <property type="project" value="TreeGrafter"/>
</dbReference>
<dbReference type="GO" id="GO:0019563">
    <property type="term" value="P:glycerol catabolic process"/>
    <property type="evidence" value="ECO:0007669"/>
    <property type="project" value="TreeGrafter"/>
</dbReference>
<dbReference type="GO" id="GO:0006096">
    <property type="term" value="P:glycolytic process"/>
    <property type="evidence" value="ECO:0007669"/>
    <property type="project" value="UniProtKB-UniRule"/>
</dbReference>
<dbReference type="CDD" id="cd00311">
    <property type="entry name" value="TIM"/>
    <property type="match status" value="1"/>
</dbReference>
<dbReference type="FunFam" id="3.20.20.70:FF:000020">
    <property type="entry name" value="Triosephosphate isomerase"/>
    <property type="match status" value="1"/>
</dbReference>
<dbReference type="Gene3D" id="3.20.20.70">
    <property type="entry name" value="Aldolase class I"/>
    <property type="match status" value="1"/>
</dbReference>
<dbReference type="HAMAP" id="MF_00147_B">
    <property type="entry name" value="TIM_B"/>
    <property type="match status" value="1"/>
</dbReference>
<dbReference type="InterPro" id="IPR013785">
    <property type="entry name" value="Aldolase_TIM"/>
</dbReference>
<dbReference type="InterPro" id="IPR035990">
    <property type="entry name" value="TIM_sf"/>
</dbReference>
<dbReference type="InterPro" id="IPR022896">
    <property type="entry name" value="TrioseP_Isoase_bac/euk"/>
</dbReference>
<dbReference type="InterPro" id="IPR000652">
    <property type="entry name" value="Triosephosphate_isomerase"/>
</dbReference>
<dbReference type="InterPro" id="IPR020861">
    <property type="entry name" value="Triosephosphate_isomerase_AS"/>
</dbReference>
<dbReference type="NCBIfam" id="TIGR00419">
    <property type="entry name" value="tim"/>
    <property type="match status" value="1"/>
</dbReference>
<dbReference type="PANTHER" id="PTHR21139">
    <property type="entry name" value="TRIOSEPHOSPHATE ISOMERASE"/>
    <property type="match status" value="1"/>
</dbReference>
<dbReference type="PANTHER" id="PTHR21139:SF42">
    <property type="entry name" value="TRIOSEPHOSPHATE ISOMERASE"/>
    <property type="match status" value="1"/>
</dbReference>
<dbReference type="Pfam" id="PF00121">
    <property type="entry name" value="TIM"/>
    <property type="match status" value="1"/>
</dbReference>
<dbReference type="SUPFAM" id="SSF51351">
    <property type="entry name" value="Triosephosphate isomerase (TIM)"/>
    <property type="match status" value="1"/>
</dbReference>
<dbReference type="PROSITE" id="PS00171">
    <property type="entry name" value="TIM_1"/>
    <property type="match status" value="1"/>
</dbReference>
<dbReference type="PROSITE" id="PS51440">
    <property type="entry name" value="TIM_2"/>
    <property type="match status" value="1"/>
</dbReference>
<name>TPIS_ACTP7</name>
<organism>
    <name type="scientific">Actinobacillus pleuropneumoniae serotype 7 (strain AP76)</name>
    <dbReference type="NCBI Taxonomy" id="537457"/>
    <lineage>
        <taxon>Bacteria</taxon>
        <taxon>Pseudomonadati</taxon>
        <taxon>Pseudomonadota</taxon>
        <taxon>Gammaproteobacteria</taxon>
        <taxon>Pasteurellales</taxon>
        <taxon>Pasteurellaceae</taxon>
        <taxon>Actinobacillus</taxon>
    </lineage>
</organism>
<protein>
    <recommendedName>
        <fullName evidence="1">Triosephosphate isomerase</fullName>
        <shortName evidence="1">TIM</shortName>
        <shortName evidence="1">TPI</shortName>
        <ecNumber evidence="1">5.3.1.1</ecNumber>
    </recommendedName>
    <alternativeName>
        <fullName evidence="1">Triose-phosphate isomerase</fullName>
    </alternativeName>
</protein>
<comment type="function">
    <text evidence="1">Involved in the gluconeogenesis. Catalyzes stereospecifically the conversion of dihydroxyacetone phosphate (DHAP) to D-glyceraldehyde-3-phosphate (G3P).</text>
</comment>
<comment type="catalytic activity">
    <reaction evidence="1">
        <text>D-glyceraldehyde 3-phosphate = dihydroxyacetone phosphate</text>
        <dbReference type="Rhea" id="RHEA:18585"/>
        <dbReference type="ChEBI" id="CHEBI:57642"/>
        <dbReference type="ChEBI" id="CHEBI:59776"/>
        <dbReference type="EC" id="5.3.1.1"/>
    </reaction>
</comment>
<comment type="pathway">
    <text evidence="1">Carbohydrate biosynthesis; gluconeogenesis.</text>
</comment>
<comment type="pathway">
    <text evidence="1">Carbohydrate degradation; glycolysis; D-glyceraldehyde 3-phosphate from glycerone phosphate: step 1/1.</text>
</comment>
<comment type="subunit">
    <text evidence="1">Homodimer.</text>
</comment>
<comment type="subcellular location">
    <subcellularLocation>
        <location evidence="1">Cytoplasm</location>
    </subcellularLocation>
</comment>
<comment type="similarity">
    <text evidence="1">Belongs to the triosephosphate isomerase family.</text>
</comment>
<reference key="1">
    <citation type="submission" date="2008-06" db="EMBL/GenBank/DDBJ databases">
        <title>Genome and proteome analysis of A. pleuropneumoniae serotype 7.</title>
        <authorList>
            <person name="Linke B."/>
            <person name="Buettner F."/>
            <person name="Martinez-Arias R."/>
            <person name="Goesmann A."/>
            <person name="Baltes N."/>
            <person name="Tegetmeyer H."/>
            <person name="Singh M."/>
            <person name="Gerlach G.F."/>
        </authorList>
    </citation>
    <scope>NUCLEOTIDE SEQUENCE [LARGE SCALE GENOMIC DNA]</scope>
    <source>
        <strain>AP76</strain>
    </source>
</reference>
<evidence type="ECO:0000255" key="1">
    <source>
        <dbReference type="HAMAP-Rule" id="MF_00147"/>
    </source>
</evidence>
<accession>B3H2Z6</accession>
<gene>
    <name evidence="1" type="primary">tpiA</name>
    <name type="ordered locus">APP7_2014</name>
</gene>
<feature type="chain" id="PRO_1000096471" description="Triosephosphate isomerase">
    <location>
        <begin position="1"/>
        <end position="256"/>
    </location>
</feature>
<feature type="active site" description="Electrophile" evidence="1">
    <location>
        <position position="97"/>
    </location>
</feature>
<feature type="active site" description="Proton acceptor" evidence="1">
    <location>
        <position position="169"/>
    </location>
</feature>
<feature type="binding site" evidence="1">
    <location>
        <begin position="10"/>
        <end position="12"/>
    </location>
    <ligand>
        <name>substrate</name>
    </ligand>
</feature>
<feature type="binding site" evidence="1">
    <location>
        <position position="175"/>
    </location>
    <ligand>
        <name>substrate</name>
    </ligand>
</feature>
<feature type="binding site" evidence="1">
    <location>
        <position position="214"/>
    </location>
    <ligand>
        <name>substrate</name>
    </ligand>
</feature>
<feature type="binding site" evidence="1">
    <location>
        <begin position="235"/>
        <end position="236"/>
    </location>
    <ligand>
        <name>substrate</name>
    </ligand>
</feature>
<proteinExistence type="inferred from homology"/>
<sequence length="256" mass="26522">MARRPLVMGNWKLNGSKAFTKELIAGLKAELADVKGCDVAIAPPVMYLAEAEAALAGQSVIALGAQNVDVNVQGAFTGDISTEMLKDFGAKYIIIGHSERRTYHKECDTFIAKKFAALKAAGLVPVLCIGETEAENEAGQTEAVCAKQIDAVIDALGVEAFNGAVIAYEPIWAIGTGKSATPAQAQAVHAFIRGHIAAKSQAVADQVIIQYGGSVNDANAAELFTQPDIDGALVGGASLKAPAFAVIVKAAEKAKA</sequence>